<feature type="chain" id="PRO_0000196842" description="Putative ATP synthase protein YMF19">
    <location>
        <begin position="1"/>
        <end position="158"/>
    </location>
</feature>
<feature type="transmembrane region" description="Helical" evidence="2">
    <location>
        <begin position="7"/>
        <end position="27"/>
    </location>
</feature>
<keyword id="KW-0066">ATP synthesis</keyword>
<keyword id="KW-0067">ATP-binding</keyword>
<keyword id="KW-0138">CF(0)</keyword>
<keyword id="KW-0375">Hydrogen ion transport</keyword>
<keyword id="KW-0406">Ion transport</keyword>
<keyword id="KW-0472">Membrane</keyword>
<keyword id="KW-0496">Mitochondrion</keyword>
<keyword id="KW-0547">Nucleotide-binding</keyword>
<keyword id="KW-1278">Translocase</keyword>
<keyword id="KW-0812">Transmembrane</keyword>
<keyword id="KW-1133">Transmembrane helix</keyword>
<keyword id="KW-0813">Transport</keyword>
<proteinExistence type="inferred from homology"/>
<accession>Q03152</accession>
<comment type="function">
    <text evidence="1">This is one of the chains of the nonenzymatic component (CF(0) subunit) of the mitochondrial ATPase complex.</text>
</comment>
<comment type="catalytic activity">
    <reaction>
        <text>ATP + H2O + 4 H(+)(in) = ADP + phosphate + 5 H(+)(out)</text>
        <dbReference type="Rhea" id="RHEA:57720"/>
        <dbReference type="ChEBI" id="CHEBI:15377"/>
        <dbReference type="ChEBI" id="CHEBI:15378"/>
        <dbReference type="ChEBI" id="CHEBI:30616"/>
        <dbReference type="ChEBI" id="CHEBI:43474"/>
        <dbReference type="ChEBI" id="CHEBI:456216"/>
        <dbReference type="EC" id="7.1.2.2"/>
    </reaction>
</comment>
<comment type="subunit">
    <text evidence="1">F-type ATPases have 2 components, CF(1) - the catalytic core - and CF(0) - the membrane proton channel. CF(1) has five subunits: alpha(3), beta(3), gamma(1), delta(1), epsilon(1). CF(0) has three main subunits: a, b and c (By similarity).</text>
</comment>
<comment type="subcellular location">
    <subcellularLocation>
        <location evidence="1">Mitochondrion membrane</location>
        <topology evidence="1">Single-pass membrane protein</topology>
    </subcellularLocation>
</comment>
<comment type="similarity">
    <text evidence="3">Belongs to the ATPase protein YMF19 family.</text>
</comment>
<organism>
    <name type="scientific">Brassica napus</name>
    <name type="common">Rape</name>
    <dbReference type="NCBI Taxonomy" id="3708"/>
    <lineage>
        <taxon>Eukaryota</taxon>
        <taxon>Viridiplantae</taxon>
        <taxon>Streptophyta</taxon>
        <taxon>Embryophyta</taxon>
        <taxon>Tracheophyta</taxon>
        <taxon>Spermatophyta</taxon>
        <taxon>Magnoliopsida</taxon>
        <taxon>eudicotyledons</taxon>
        <taxon>Gunneridae</taxon>
        <taxon>Pentapetalae</taxon>
        <taxon>rosids</taxon>
        <taxon>malvids</taxon>
        <taxon>Brassicales</taxon>
        <taxon>Brassicaceae</taxon>
        <taxon>Brassiceae</taxon>
        <taxon>Brassica</taxon>
    </lineage>
</organism>
<reference key="1">
    <citation type="journal article" date="1992" name="Mol. Gen. Genet.">
        <title>Sequence and transcript analysis of the Nco2.5 Ogura-specific fragment correlated with cytoplasmic male sterility in Brassica cybrids.</title>
        <authorList>
            <person name="Bonhomme S."/>
            <person name="Budar F."/>
            <person name="Lancelin D."/>
            <person name="Small I."/>
            <person name="Defrance M.-C."/>
            <person name="Pelletier G."/>
        </authorList>
    </citation>
    <scope>NUCLEOTIDE SEQUENCE [GENOMIC DNA]</scope>
    <source>
        <tissue>Leaf</tissue>
    </source>
</reference>
<gene>
    <name type="primary">YMF19</name>
</gene>
<dbReference type="EC" id="7.1.2.2"/>
<dbReference type="EMBL" id="Z12626">
    <property type="protein sequence ID" value="CAA78272.1"/>
    <property type="molecule type" value="Genomic_DNA"/>
</dbReference>
<dbReference type="EMBL" id="Z12628">
    <property type="protein sequence ID" value="CAA78275.1"/>
    <property type="molecule type" value="Genomic_DNA"/>
</dbReference>
<dbReference type="PIR" id="S65132">
    <property type="entry name" value="S65132"/>
</dbReference>
<dbReference type="SMR" id="Q03152"/>
<dbReference type="GO" id="GO:0031966">
    <property type="term" value="C:mitochondrial membrane"/>
    <property type="evidence" value="ECO:0007669"/>
    <property type="project" value="UniProtKB-SubCell"/>
</dbReference>
<dbReference type="GO" id="GO:0045259">
    <property type="term" value="C:proton-transporting ATP synthase complex"/>
    <property type="evidence" value="ECO:0007669"/>
    <property type="project" value="UniProtKB-KW"/>
</dbReference>
<dbReference type="GO" id="GO:0005524">
    <property type="term" value="F:ATP binding"/>
    <property type="evidence" value="ECO:0007669"/>
    <property type="project" value="UniProtKB-KW"/>
</dbReference>
<dbReference type="GO" id="GO:0006754">
    <property type="term" value="P:ATP biosynthetic process"/>
    <property type="evidence" value="ECO:0007669"/>
    <property type="project" value="UniProtKB-KW"/>
</dbReference>
<dbReference type="GO" id="GO:1902600">
    <property type="term" value="P:proton transmembrane transport"/>
    <property type="evidence" value="ECO:0007669"/>
    <property type="project" value="UniProtKB-KW"/>
</dbReference>
<dbReference type="InterPro" id="IPR009455">
    <property type="entry name" value="YMF19"/>
</dbReference>
<dbReference type="InterPro" id="IPR044975">
    <property type="entry name" value="YMF19-like"/>
</dbReference>
<dbReference type="InterPro" id="IPR003319">
    <property type="entry name" value="YMF19-like_N"/>
</dbReference>
<dbReference type="PANTHER" id="PTHR36816">
    <property type="entry name" value="ATP SYNTHASE PROTEIN YMF19"/>
    <property type="match status" value="1"/>
</dbReference>
<dbReference type="PANTHER" id="PTHR36816:SF1">
    <property type="entry name" value="ATP SYNTHASE PROTEIN YMF19"/>
    <property type="match status" value="1"/>
</dbReference>
<dbReference type="Pfam" id="PF02326">
    <property type="entry name" value="YMF19"/>
    <property type="match status" value="1"/>
</dbReference>
<dbReference type="Pfam" id="PF06449">
    <property type="entry name" value="YMF19_C"/>
    <property type="match status" value="1"/>
</dbReference>
<name>YMF19_BRANA</name>
<evidence type="ECO:0000250" key="1"/>
<evidence type="ECO:0000255" key="2"/>
<evidence type="ECO:0000305" key="3"/>
<protein>
    <recommendedName>
        <fullName>Putative ATP synthase protein YMF19</fullName>
        <ecNumber>7.1.2.2</ecNumber>
    </recommendedName>
    <alternativeName>
        <fullName>Mitochondrial protein YMF19</fullName>
    </alternativeName>
</protein>
<sequence length="158" mass="18183">MPQLDKFTYFSQFFWLCLFFFTFYIFICNDGDGVLGISRILKLRNQLLSHRGKTIQSKDPNSLEDLLRKGFSTGVSYMYASLFEVSQWCKAVDLLGKRRKITLISCFGEISGSRGMERNILYNISKSSPSNTGRWITCRNCRNDIMLIHVVHGQGSIK</sequence>
<geneLocation type="mitochondrion"/>